<evidence type="ECO:0000255" key="1">
    <source>
        <dbReference type="HAMAP-Rule" id="MF_00472"/>
    </source>
</evidence>
<feature type="chain" id="PRO_0000241727" description="Ubiquinone biosynthesis O-methyltransferase">
    <location>
        <begin position="1"/>
        <end position="252"/>
    </location>
</feature>
<feature type="binding site" evidence="1">
    <location>
        <position position="51"/>
    </location>
    <ligand>
        <name>S-adenosyl-L-methionine</name>
        <dbReference type="ChEBI" id="CHEBI:59789"/>
    </ligand>
</feature>
<feature type="binding site" evidence="1">
    <location>
        <position position="70"/>
    </location>
    <ligand>
        <name>S-adenosyl-L-methionine</name>
        <dbReference type="ChEBI" id="CHEBI:59789"/>
    </ligand>
</feature>
<feature type="binding site" evidence="1">
    <location>
        <position position="91"/>
    </location>
    <ligand>
        <name>S-adenosyl-L-methionine</name>
        <dbReference type="ChEBI" id="CHEBI:59789"/>
    </ligand>
</feature>
<feature type="binding site" evidence="1">
    <location>
        <position position="136"/>
    </location>
    <ligand>
        <name>S-adenosyl-L-methionine</name>
        <dbReference type="ChEBI" id="CHEBI:59789"/>
    </ligand>
</feature>
<protein>
    <recommendedName>
        <fullName evidence="1">Ubiquinone biosynthesis O-methyltransferase</fullName>
    </recommendedName>
    <alternativeName>
        <fullName evidence="1">2-polyprenyl-6-hydroxyphenol methylase</fullName>
        <ecNumber evidence="1">2.1.1.222</ecNumber>
    </alternativeName>
    <alternativeName>
        <fullName evidence="1">3-demethylubiquinone 3-O-methyltransferase</fullName>
        <ecNumber evidence="1">2.1.1.64</ecNumber>
    </alternativeName>
</protein>
<dbReference type="EC" id="2.1.1.222" evidence="1"/>
<dbReference type="EC" id="2.1.1.64" evidence="1"/>
<dbReference type="EMBL" id="CP000267">
    <property type="protein sequence ID" value="ABD70540.1"/>
    <property type="molecule type" value="Genomic_DNA"/>
</dbReference>
<dbReference type="SMR" id="Q21UL3"/>
<dbReference type="STRING" id="338969.Rfer_2828"/>
<dbReference type="KEGG" id="rfr:Rfer_2828"/>
<dbReference type="eggNOG" id="COG2227">
    <property type="taxonomic scope" value="Bacteria"/>
</dbReference>
<dbReference type="HOGENOM" id="CLU_042432_5_0_4"/>
<dbReference type="UniPathway" id="UPA00232"/>
<dbReference type="Proteomes" id="UP000008332">
    <property type="component" value="Chromosome"/>
</dbReference>
<dbReference type="GO" id="GO:0102208">
    <property type="term" value="F:2-polyprenyl-6-hydroxyphenol methylase activity"/>
    <property type="evidence" value="ECO:0007669"/>
    <property type="project" value="UniProtKB-EC"/>
</dbReference>
<dbReference type="GO" id="GO:0061542">
    <property type="term" value="F:3-demethylubiquinol 3-O-methyltransferase activity"/>
    <property type="evidence" value="ECO:0007669"/>
    <property type="project" value="UniProtKB-UniRule"/>
</dbReference>
<dbReference type="GO" id="GO:0010420">
    <property type="term" value="F:polyprenyldihydroxybenzoate methyltransferase activity"/>
    <property type="evidence" value="ECO:0007669"/>
    <property type="project" value="InterPro"/>
</dbReference>
<dbReference type="GO" id="GO:0032259">
    <property type="term" value="P:methylation"/>
    <property type="evidence" value="ECO:0007669"/>
    <property type="project" value="UniProtKB-KW"/>
</dbReference>
<dbReference type="CDD" id="cd02440">
    <property type="entry name" value="AdoMet_MTases"/>
    <property type="match status" value="1"/>
</dbReference>
<dbReference type="FunFam" id="3.40.50.150:FF:000028">
    <property type="entry name" value="Ubiquinone biosynthesis O-methyltransferase"/>
    <property type="match status" value="1"/>
</dbReference>
<dbReference type="Gene3D" id="3.40.50.150">
    <property type="entry name" value="Vaccinia Virus protein VP39"/>
    <property type="match status" value="1"/>
</dbReference>
<dbReference type="HAMAP" id="MF_00472">
    <property type="entry name" value="UbiG"/>
    <property type="match status" value="1"/>
</dbReference>
<dbReference type="InterPro" id="IPR029063">
    <property type="entry name" value="SAM-dependent_MTases_sf"/>
</dbReference>
<dbReference type="InterPro" id="IPR010233">
    <property type="entry name" value="UbiG_MeTrfase"/>
</dbReference>
<dbReference type="NCBIfam" id="TIGR01983">
    <property type="entry name" value="UbiG"/>
    <property type="match status" value="1"/>
</dbReference>
<dbReference type="PANTHER" id="PTHR43464">
    <property type="entry name" value="METHYLTRANSFERASE"/>
    <property type="match status" value="1"/>
</dbReference>
<dbReference type="PANTHER" id="PTHR43464:SF19">
    <property type="entry name" value="UBIQUINONE BIOSYNTHESIS O-METHYLTRANSFERASE, MITOCHONDRIAL"/>
    <property type="match status" value="1"/>
</dbReference>
<dbReference type="Pfam" id="PF13489">
    <property type="entry name" value="Methyltransf_23"/>
    <property type="match status" value="1"/>
</dbReference>
<dbReference type="SUPFAM" id="SSF53335">
    <property type="entry name" value="S-adenosyl-L-methionine-dependent methyltransferases"/>
    <property type="match status" value="1"/>
</dbReference>
<proteinExistence type="inferred from homology"/>
<comment type="function">
    <text evidence="1">O-methyltransferase that catalyzes the 2 O-methylation steps in the ubiquinone biosynthetic pathway.</text>
</comment>
<comment type="catalytic activity">
    <reaction evidence="1">
        <text>a 3-demethylubiquinol + S-adenosyl-L-methionine = a ubiquinol + S-adenosyl-L-homocysteine + H(+)</text>
        <dbReference type="Rhea" id="RHEA:44380"/>
        <dbReference type="Rhea" id="RHEA-COMP:9566"/>
        <dbReference type="Rhea" id="RHEA-COMP:10914"/>
        <dbReference type="ChEBI" id="CHEBI:15378"/>
        <dbReference type="ChEBI" id="CHEBI:17976"/>
        <dbReference type="ChEBI" id="CHEBI:57856"/>
        <dbReference type="ChEBI" id="CHEBI:59789"/>
        <dbReference type="ChEBI" id="CHEBI:84422"/>
        <dbReference type="EC" id="2.1.1.64"/>
    </reaction>
</comment>
<comment type="catalytic activity">
    <reaction evidence="1">
        <text>a 3-(all-trans-polyprenyl)benzene-1,2-diol + S-adenosyl-L-methionine = a 2-methoxy-6-(all-trans-polyprenyl)phenol + S-adenosyl-L-homocysteine + H(+)</text>
        <dbReference type="Rhea" id="RHEA:31411"/>
        <dbReference type="Rhea" id="RHEA-COMP:9550"/>
        <dbReference type="Rhea" id="RHEA-COMP:9551"/>
        <dbReference type="ChEBI" id="CHEBI:15378"/>
        <dbReference type="ChEBI" id="CHEBI:57856"/>
        <dbReference type="ChEBI" id="CHEBI:59789"/>
        <dbReference type="ChEBI" id="CHEBI:62729"/>
        <dbReference type="ChEBI" id="CHEBI:62731"/>
        <dbReference type="EC" id="2.1.1.222"/>
    </reaction>
</comment>
<comment type="pathway">
    <text evidence="1">Cofactor biosynthesis; ubiquinone biosynthesis.</text>
</comment>
<comment type="similarity">
    <text evidence="1">Belongs to the methyltransferase superfamily. UbiG/COQ3 family.</text>
</comment>
<gene>
    <name evidence="1" type="primary">ubiG</name>
    <name type="ordered locus">Rfer_2828</name>
</gene>
<sequence>MSHQPYFADNHPMTSTLNADPAELAKFSDLAHRWWDLEGEFRPLHQINPLRLEWINHLCPVAGQQVLDVGCGGGILADSMARLGAQVTGIDLASKALRVAQLHALEAQTPNLQYQEISVEALAAQQPGSFDVVTCMEMLEHVPDPASVVRACATLVKPGGWVFFSTLNRSPKSFVLAIVGAEYVLNLLPRGTHEYAKMIRPSELASYCRSVELDLRHTRGMQYNPLTRRYWMSDDTSVNYLFATQKSNAAIL</sequence>
<name>UBIG_ALBFT</name>
<keyword id="KW-0489">Methyltransferase</keyword>
<keyword id="KW-1185">Reference proteome</keyword>
<keyword id="KW-0949">S-adenosyl-L-methionine</keyword>
<keyword id="KW-0808">Transferase</keyword>
<keyword id="KW-0831">Ubiquinone biosynthesis</keyword>
<organism>
    <name type="scientific">Albidiferax ferrireducens (strain ATCC BAA-621 / DSM 15236 / T118)</name>
    <name type="common">Rhodoferax ferrireducens</name>
    <dbReference type="NCBI Taxonomy" id="338969"/>
    <lineage>
        <taxon>Bacteria</taxon>
        <taxon>Pseudomonadati</taxon>
        <taxon>Pseudomonadota</taxon>
        <taxon>Betaproteobacteria</taxon>
        <taxon>Burkholderiales</taxon>
        <taxon>Comamonadaceae</taxon>
        <taxon>Rhodoferax</taxon>
    </lineage>
</organism>
<accession>Q21UL3</accession>
<reference key="1">
    <citation type="submission" date="2006-02" db="EMBL/GenBank/DDBJ databases">
        <title>Complete sequence of chromosome of Rhodoferax ferrireducens DSM 15236.</title>
        <authorList>
            <person name="Copeland A."/>
            <person name="Lucas S."/>
            <person name="Lapidus A."/>
            <person name="Barry K."/>
            <person name="Detter J.C."/>
            <person name="Glavina del Rio T."/>
            <person name="Hammon N."/>
            <person name="Israni S."/>
            <person name="Pitluck S."/>
            <person name="Brettin T."/>
            <person name="Bruce D."/>
            <person name="Han C."/>
            <person name="Tapia R."/>
            <person name="Gilna P."/>
            <person name="Kiss H."/>
            <person name="Schmutz J."/>
            <person name="Larimer F."/>
            <person name="Land M."/>
            <person name="Kyrpides N."/>
            <person name="Ivanova N."/>
            <person name="Richardson P."/>
        </authorList>
    </citation>
    <scope>NUCLEOTIDE SEQUENCE [LARGE SCALE GENOMIC DNA]</scope>
    <source>
        <strain>ATCC BAA-621 / DSM 15236 / T118</strain>
    </source>
</reference>